<organism>
    <name type="scientific">Lactococcus lactis subsp. cremoris (strain SK11)</name>
    <dbReference type="NCBI Taxonomy" id="272622"/>
    <lineage>
        <taxon>Bacteria</taxon>
        <taxon>Bacillati</taxon>
        <taxon>Bacillota</taxon>
        <taxon>Bacilli</taxon>
        <taxon>Lactobacillales</taxon>
        <taxon>Streptococcaceae</taxon>
        <taxon>Lactococcus</taxon>
        <taxon>Lactococcus cremoris subsp. cremoris</taxon>
    </lineage>
</organism>
<dbReference type="EMBL" id="CP000425">
    <property type="protein sequence ID" value="ABJ72905.1"/>
    <property type="molecule type" value="Genomic_DNA"/>
</dbReference>
<dbReference type="RefSeq" id="WP_011676195.1">
    <property type="nucleotide sequence ID" value="NC_008527.1"/>
</dbReference>
<dbReference type="SMR" id="Q02YR7"/>
<dbReference type="GeneID" id="61109520"/>
<dbReference type="KEGG" id="llc:LACR_1387"/>
<dbReference type="HOGENOM" id="CLU_092227_2_0_9"/>
<dbReference type="Proteomes" id="UP000000240">
    <property type="component" value="Chromosome"/>
</dbReference>
<dbReference type="GO" id="GO:0015934">
    <property type="term" value="C:large ribosomal subunit"/>
    <property type="evidence" value="ECO:0007669"/>
    <property type="project" value="InterPro"/>
</dbReference>
<dbReference type="GO" id="GO:0070180">
    <property type="term" value="F:large ribosomal subunit rRNA binding"/>
    <property type="evidence" value="ECO:0007669"/>
    <property type="project" value="UniProtKB-UniRule"/>
</dbReference>
<dbReference type="GO" id="GO:0003735">
    <property type="term" value="F:structural constituent of ribosome"/>
    <property type="evidence" value="ECO:0007669"/>
    <property type="project" value="InterPro"/>
</dbReference>
<dbReference type="GO" id="GO:0006412">
    <property type="term" value="P:translation"/>
    <property type="evidence" value="ECO:0007669"/>
    <property type="project" value="UniProtKB-UniRule"/>
</dbReference>
<dbReference type="CDD" id="cd05797">
    <property type="entry name" value="Ribosomal_L10"/>
    <property type="match status" value="1"/>
</dbReference>
<dbReference type="FunFam" id="3.30.70.1730:FF:000001">
    <property type="entry name" value="50S ribosomal protein L10"/>
    <property type="match status" value="1"/>
</dbReference>
<dbReference type="Gene3D" id="3.30.70.1730">
    <property type="match status" value="1"/>
</dbReference>
<dbReference type="HAMAP" id="MF_00362">
    <property type="entry name" value="Ribosomal_uL10"/>
    <property type="match status" value="1"/>
</dbReference>
<dbReference type="InterPro" id="IPR001790">
    <property type="entry name" value="Ribosomal_uL10"/>
</dbReference>
<dbReference type="InterPro" id="IPR043141">
    <property type="entry name" value="Ribosomal_uL10-like_sf"/>
</dbReference>
<dbReference type="InterPro" id="IPR022973">
    <property type="entry name" value="Ribosomal_uL10_bac"/>
</dbReference>
<dbReference type="InterPro" id="IPR047865">
    <property type="entry name" value="Ribosomal_uL10_bac_type"/>
</dbReference>
<dbReference type="InterPro" id="IPR002363">
    <property type="entry name" value="Ribosomal_uL10_CS_bac"/>
</dbReference>
<dbReference type="NCBIfam" id="NF000955">
    <property type="entry name" value="PRK00099.1-1"/>
    <property type="match status" value="1"/>
</dbReference>
<dbReference type="PANTHER" id="PTHR11560">
    <property type="entry name" value="39S RIBOSOMAL PROTEIN L10, MITOCHONDRIAL"/>
    <property type="match status" value="1"/>
</dbReference>
<dbReference type="Pfam" id="PF00466">
    <property type="entry name" value="Ribosomal_L10"/>
    <property type="match status" value="1"/>
</dbReference>
<dbReference type="SUPFAM" id="SSF160369">
    <property type="entry name" value="Ribosomal protein L10-like"/>
    <property type="match status" value="1"/>
</dbReference>
<dbReference type="PROSITE" id="PS01109">
    <property type="entry name" value="RIBOSOMAL_L10"/>
    <property type="match status" value="1"/>
</dbReference>
<proteinExistence type="inferred from homology"/>
<keyword id="KW-0687">Ribonucleoprotein</keyword>
<keyword id="KW-0689">Ribosomal protein</keyword>
<keyword id="KW-0694">RNA-binding</keyword>
<keyword id="KW-0699">rRNA-binding</keyword>
<sequence>MSDYKVNEATIAKKAELVDVYAQKMTEAASIVVADSRGLSVDEDTQLRKQLREAGVEFKVVKNSILRRAAEKAGLEGLSEAFSGPSAVAFSNEDVVAPAKVLADFAKDAENLEIKAGVIEGKVSSKEEIQAIASLPSRDGLLSMLLSVLQAPIRNVALAVKAVAEKEESAA</sequence>
<comment type="function">
    <text evidence="1">Forms part of the ribosomal stalk, playing a central role in the interaction of the ribosome with GTP-bound translation factors.</text>
</comment>
<comment type="subunit">
    <text evidence="1">Part of the ribosomal stalk of the 50S ribosomal subunit. The N-terminus interacts with L11 and the large rRNA to form the base of the stalk. The C-terminus forms an elongated spine to which L12 dimers bind in a sequential fashion forming a multimeric L10(L12)X complex.</text>
</comment>
<comment type="similarity">
    <text evidence="1">Belongs to the universal ribosomal protein uL10 family.</text>
</comment>
<reference key="1">
    <citation type="journal article" date="2006" name="Proc. Natl. Acad. Sci. U.S.A.">
        <title>Comparative genomics of the lactic acid bacteria.</title>
        <authorList>
            <person name="Makarova K.S."/>
            <person name="Slesarev A."/>
            <person name="Wolf Y.I."/>
            <person name="Sorokin A."/>
            <person name="Mirkin B."/>
            <person name="Koonin E.V."/>
            <person name="Pavlov A."/>
            <person name="Pavlova N."/>
            <person name="Karamychev V."/>
            <person name="Polouchine N."/>
            <person name="Shakhova V."/>
            <person name="Grigoriev I."/>
            <person name="Lou Y."/>
            <person name="Rohksar D."/>
            <person name="Lucas S."/>
            <person name="Huang K."/>
            <person name="Goodstein D.M."/>
            <person name="Hawkins T."/>
            <person name="Plengvidhya V."/>
            <person name="Welker D."/>
            <person name="Hughes J."/>
            <person name="Goh Y."/>
            <person name="Benson A."/>
            <person name="Baldwin K."/>
            <person name="Lee J.-H."/>
            <person name="Diaz-Muniz I."/>
            <person name="Dosti B."/>
            <person name="Smeianov V."/>
            <person name="Wechter W."/>
            <person name="Barabote R."/>
            <person name="Lorca G."/>
            <person name="Altermann E."/>
            <person name="Barrangou R."/>
            <person name="Ganesan B."/>
            <person name="Xie Y."/>
            <person name="Rawsthorne H."/>
            <person name="Tamir D."/>
            <person name="Parker C."/>
            <person name="Breidt F."/>
            <person name="Broadbent J.R."/>
            <person name="Hutkins R."/>
            <person name="O'Sullivan D."/>
            <person name="Steele J."/>
            <person name="Unlu G."/>
            <person name="Saier M.H. Jr."/>
            <person name="Klaenhammer T."/>
            <person name="Richardson P."/>
            <person name="Kozyavkin S."/>
            <person name="Weimer B.C."/>
            <person name="Mills D.A."/>
        </authorList>
    </citation>
    <scope>NUCLEOTIDE SEQUENCE [LARGE SCALE GENOMIC DNA]</scope>
    <source>
        <strain>SK11</strain>
    </source>
</reference>
<accession>Q02YR7</accession>
<evidence type="ECO:0000255" key="1">
    <source>
        <dbReference type="HAMAP-Rule" id="MF_00362"/>
    </source>
</evidence>
<evidence type="ECO:0000305" key="2"/>
<gene>
    <name evidence="1" type="primary">rplJ</name>
    <name type="ordered locus">LACR_1387</name>
</gene>
<feature type="chain" id="PRO_1000005521" description="Large ribosomal subunit protein uL10">
    <location>
        <begin position="1"/>
        <end position="171"/>
    </location>
</feature>
<protein>
    <recommendedName>
        <fullName evidence="1">Large ribosomal subunit protein uL10</fullName>
    </recommendedName>
    <alternativeName>
        <fullName evidence="2">50S ribosomal protein L10</fullName>
    </alternativeName>
</protein>
<name>RL10_LACLS</name>